<protein>
    <recommendedName>
        <fullName evidence="1">4-hydroxythreonine-4-phosphate dehydrogenase</fullName>
        <ecNumber evidence="1">1.1.1.262</ecNumber>
    </recommendedName>
    <alternativeName>
        <fullName evidence="1">4-(phosphohydroxy)-L-threonine dehydrogenase</fullName>
    </alternativeName>
</protein>
<accession>A4W6F8</accession>
<proteinExistence type="inferred from homology"/>
<reference key="1">
    <citation type="journal article" date="2010" name="PLoS Genet.">
        <title>Genome sequence of the plant growth promoting endophytic bacterium Enterobacter sp. 638.</title>
        <authorList>
            <person name="Taghavi S."/>
            <person name="van der Lelie D."/>
            <person name="Hoffman A."/>
            <person name="Zhang Y.B."/>
            <person name="Walla M.D."/>
            <person name="Vangronsveld J."/>
            <person name="Newman L."/>
            <person name="Monchy S."/>
        </authorList>
    </citation>
    <scope>NUCLEOTIDE SEQUENCE [LARGE SCALE GENOMIC DNA]</scope>
    <source>
        <strain>638</strain>
    </source>
</reference>
<feature type="chain" id="PRO_1000061032" description="4-hydroxythreonine-4-phosphate dehydrogenase">
    <location>
        <begin position="1"/>
        <end position="328"/>
    </location>
</feature>
<feature type="binding site" evidence="1">
    <location>
        <position position="135"/>
    </location>
    <ligand>
        <name>substrate</name>
    </ligand>
</feature>
<feature type="binding site" evidence="1">
    <location>
        <position position="136"/>
    </location>
    <ligand>
        <name>substrate</name>
    </ligand>
</feature>
<feature type="binding site" evidence="1">
    <location>
        <position position="165"/>
    </location>
    <ligand>
        <name>a divalent metal cation</name>
        <dbReference type="ChEBI" id="CHEBI:60240"/>
        <note>ligand shared between dimeric partners</note>
    </ligand>
</feature>
<feature type="binding site" evidence="1">
    <location>
        <position position="210"/>
    </location>
    <ligand>
        <name>a divalent metal cation</name>
        <dbReference type="ChEBI" id="CHEBI:60240"/>
        <note>ligand shared between dimeric partners</note>
    </ligand>
</feature>
<feature type="binding site" evidence="1">
    <location>
        <position position="265"/>
    </location>
    <ligand>
        <name>a divalent metal cation</name>
        <dbReference type="ChEBI" id="CHEBI:60240"/>
        <note>ligand shared between dimeric partners</note>
    </ligand>
</feature>
<feature type="binding site" evidence="1">
    <location>
        <position position="273"/>
    </location>
    <ligand>
        <name>substrate</name>
    </ligand>
</feature>
<feature type="binding site" evidence="1">
    <location>
        <position position="282"/>
    </location>
    <ligand>
        <name>substrate</name>
    </ligand>
</feature>
<feature type="binding site" evidence="1">
    <location>
        <position position="291"/>
    </location>
    <ligand>
        <name>substrate</name>
    </ligand>
</feature>
<evidence type="ECO:0000255" key="1">
    <source>
        <dbReference type="HAMAP-Rule" id="MF_00536"/>
    </source>
</evidence>
<gene>
    <name evidence="1" type="primary">pdxA</name>
    <name type="ordered locus">Ent638_0601</name>
</gene>
<comment type="function">
    <text evidence="1">Catalyzes the NAD(P)-dependent oxidation of 4-(phosphooxy)-L-threonine (HTP) into 2-amino-3-oxo-4-(phosphooxy)butyric acid which spontaneously decarboxylates to form 3-amino-2-oxopropyl phosphate (AHAP).</text>
</comment>
<comment type="catalytic activity">
    <reaction evidence="1">
        <text>4-(phosphooxy)-L-threonine + NAD(+) = 3-amino-2-oxopropyl phosphate + CO2 + NADH</text>
        <dbReference type="Rhea" id="RHEA:32275"/>
        <dbReference type="ChEBI" id="CHEBI:16526"/>
        <dbReference type="ChEBI" id="CHEBI:57279"/>
        <dbReference type="ChEBI" id="CHEBI:57540"/>
        <dbReference type="ChEBI" id="CHEBI:57945"/>
        <dbReference type="ChEBI" id="CHEBI:58452"/>
        <dbReference type="EC" id="1.1.1.262"/>
    </reaction>
</comment>
<comment type="cofactor">
    <cofactor evidence="1">
        <name>Zn(2+)</name>
        <dbReference type="ChEBI" id="CHEBI:29105"/>
    </cofactor>
    <cofactor evidence="1">
        <name>Mg(2+)</name>
        <dbReference type="ChEBI" id="CHEBI:18420"/>
    </cofactor>
    <cofactor evidence="1">
        <name>Co(2+)</name>
        <dbReference type="ChEBI" id="CHEBI:48828"/>
    </cofactor>
    <text evidence="1">Binds 1 divalent metal cation per subunit. Can use ions such as Zn(2+), Mg(2+) or Co(2+).</text>
</comment>
<comment type="pathway">
    <text evidence="1">Cofactor biosynthesis; pyridoxine 5'-phosphate biosynthesis; pyridoxine 5'-phosphate from D-erythrose 4-phosphate: step 4/5.</text>
</comment>
<comment type="subunit">
    <text evidence="1">Homodimer.</text>
</comment>
<comment type="subcellular location">
    <subcellularLocation>
        <location evidence="1">Cytoplasm</location>
    </subcellularLocation>
</comment>
<comment type="miscellaneous">
    <text evidence="1">The active site is located at the dimer interface.</text>
</comment>
<comment type="similarity">
    <text evidence="1">Belongs to the PdxA family.</text>
</comment>
<keyword id="KW-0170">Cobalt</keyword>
<keyword id="KW-0963">Cytoplasm</keyword>
<keyword id="KW-0460">Magnesium</keyword>
<keyword id="KW-0479">Metal-binding</keyword>
<keyword id="KW-0520">NAD</keyword>
<keyword id="KW-0521">NADP</keyword>
<keyword id="KW-0560">Oxidoreductase</keyword>
<keyword id="KW-0664">Pyridoxine biosynthesis</keyword>
<keyword id="KW-0862">Zinc</keyword>
<sequence length="328" mass="35156">MQPQRVVITPGEPAGIGPELVVQLAQRSWPVELVVCADATLLQDRANMLGLPLRLLPYRADQPPVPQQQGTLTLLPVVLRKPATPGVLSTDNGHYVVDTLARACDGCLNGEFAALITGPVHKGVINEAGVPFTGHTEFFEERSHSDNVVMMLATEELRVALATTHLPLKAISDAITPALLREIITILHHDLRTKFGIADPHVLVCGLNPHAGEGGHMGTEEIDTIIPVLNEMRAKGMNLSGPLPADTLFQPKYLDSADAVLAMYHDQGLPVLKYQGFGRAVNITLGLPFIRTSVDHGTALDLAGKGKADVGSFITALNLAIKMIVNTQ</sequence>
<name>PDXA_ENT38</name>
<organism>
    <name type="scientific">Enterobacter sp. (strain 638)</name>
    <dbReference type="NCBI Taxonomy" id="399742"/>
    <lineage>
        <taxon>Bacteria</taxon>
        <taxon>Pseudomonadati</taxon>
        <taxon>Pseudomonadota</taxon>
        <taxon>Gammaproteobacteria</taxon>
        <taxon>Enterobacterales</taxon>
        <taxon>Enterobacteriaceae</taxon>
        <taxon>Enterobacter</taxon>
    </lineage>
</organism>
<dbReference type="EC" id="1.1.1.262" evidence="1"/>
<dbReference type="EMBL" id="CP000653">
    <property type="protein sequence ID" value="ABP59288.1"/>
    <property type="molecule type" value="Genomic_DNA"/>
</dbReference>
<dbReference type="RefSeq" id="WP_012016010.1">
    <property type="nucleotide sequence ID" value="NC_009436.1"/>
</dbReference>
<dbReference type="SMR" id="A4W6F8"/>
<dbReference type="STRING" id="399742.Ent638_0601"/>
<dbReference type="KEGG" id="ent:Ent638_0601"/>
<dbReference type="eggNOG" id="COG1995">
    <property type="taxonomic scope" value="Bacteria"/>
</dbReference>
<dbReference type="HOGENOM" id="CLU_040168_2_0_6"/>
<dbReference type="OrthoDB" id="9801783at2"/>
<dbReference type="UniPathway" id="UPA00244">
    <property type="reaction ID" value="UER00312"/>
</dbReference>
<dbReference type="Proteomes" id="UP000000230">
    <property type="component" value="Chromosome"/>
</dbReference>
<dbReference type="GO" id="GO:0005737">
    <property type="term" value="C:cytoplasm"/>
    <property type="evidence" value="ECO:0007669"/>
    <property type="project" value="UniProtKB-SubCell"/>
</dbReference>
<dbReference type="GO" id="GO:0050570">
    <property type="term" value="F:4-hydroxythreonine-4-phosphate dehydrogenase activity"/>
    <property type="evidence" value="ECO:0007669"/>
    <property type="project" value="UniProtKB-UniRule"/>
</dbReference>
<dbReference type="GO" id="GO:0050897">
    <property type="term" value="F:cobalt ion binding"/>
    <property type="evidence" value="ECO:0007669"/>
    <property type="project" value="UniProtKB-UniRule"/>
</dbReference>
<dbReference type="GO" id="GO:0000287">
    <property type="term" value="F:magnesium ion binding"/>
    <property type="evidence" value="ECO:0007669"/>
    <property type="project" value="UniProtKB-UniRule"/>
</dbReference>
<dbReference type="GO" id="GO:0051287">
    <property type="term" value="F:NAD binding"/>
    <property type="evidence" value="ECO:0007669"/>
    <property type="project" value="InterPro"/>
</dbReference>
<dbReference type="GO" id="GO:0008270">
    <property type="term" value="F:zinc ion binding"/>
    <property type="evidence" value="ECO:0007669"/>
    <property type="project" value="UniProtKB-UniRule"/>
</dbReference>
<dbReference type="GO" id="GO:0042823">
    <property type="term" value="P:pyridoxal phosphate biosynthetic process"/>
    <property type="evidence" value="ECO:0007669"/>
    <property type="project" value="UniProtKB-UniRule"/>
</dbReference>
<dbReference type="GO" id="GO:0008615">
    <property type="term" value="P:pyridoxine biosynthetic process"/>
    <property type="evidence" value="ECO:0007669"/>
    <property type="project" value="UniProtKB-UniRule"/>
</dbReference>
<dbReference type="FunFam" id="3.40.718.10:FF:000010">
    <property type="entry name" value="4-hydroxythreonine-4-phosphate dehydrogenase"/>
    <property type="match status" value="1"/>
</dbReference>
<dbReference type="Gene3D" id="3.40.718.10">
    <property type="entry name" value="Isopropylmalate Dehydrogenase"/>
    <property type="match status" value="1"/>
</dbReference>
<dbReference type="HAMAP" id="MF_00536">
    <property type="entry name" value="PdxA"/>
    <property type="match status" value="1"/>
</dbReference>
<dbReference type="InterPro" id="IPR037510">
    <property type="entry name" value="PdxA"/>
</dbReference>
<dbReference type="InterPro" id="IPR005255">
    <property type="entry name" value="PdxA_fam"/>
</dbReference>
<dbReference type="NCBIfam" id="TIGR00557">
    <property type="entry name" value="pdxA"/>
    <property type="match status" value="1"/>
</dbReference>
<dbReference type="PANTHER" id="PTHR30004">
    <property type="entry name" value="4-HYDROXYTHREONINE-4-PHOSPHATE DEHYDROGENASE"/>
    <property type="match status" value="1"/>
</dbReference>
<dbReference type="PANTHER" id="PTHR30004:SF5">
    <property type="entry name" value="4-HYDROXYTHREONINE-4-PHOSPHATE DEHYDROGENASE"/>
    <property type="match status" value="1"/>
</dbReference>
<dbReference type="Pfam" id="PF04166">
    <property type="entry name" value="PdxA"/>
    <property type="match status" value="1"/>
</dbReference>
<dbReference type="SUPFAM" id="SSF53659">
    <property type="entry name" value="Isocitrate/Isopropylmalate dehydrogenase-like"/>
    <property type="match status" value="1"/>
</dbReference>